<comment type="function">
    <text evidence="1">Component of the cytosolic iron-sulfur (Fe-S) protein assembly (CIA) machinery. Required for the maturation of extramitochondrial Fe-S proteins. Part of an electron transfer chain functioning in an early step of cytosolic Fe-S biogenesis, facilitating the de novo assembly of a [4Fe-4S] cluster on the cytosolic Fe-S scaffold complex. Electrons are transferred from NADPH via a FAD- and FMN-containing diflavin oxidoreductase. Together with the diflavin oxidoreductase, also required for the assembly of the diferric tyrosyl radical cofactor of ribonucleotide reductase (RNR), probably by providing electrons for reduction during radical cofactor maturation in the catalytic small subunit.</text>
</comment>
<comment type="cofactor">
    <cofactor evidence="1">
        <name>[2Fe-2S] cluster</name>
        <dbReference type="ChEBI" id="CHEBI:190135"/>
    </cofactor>
</comment>
<comment type="cofactor">
    <cofactor evidence="1">
        <name>[4Fe-4S] cluster</name>
        <dbReference type="ChEBI" id="CHEBI:49883"/>
    </cofactor>
</comment>
<comment type="subunit">
    <text evidence="1">Monomer.</text>
</comment>
<comment type="subcellular location">
    <subcellularLocation>
        <location evidence="1">Cytoplasm</location>
    </subcellularLocation>
    <subcellularLocation>
        <location evidence="1">Mitochondrion intermembrane space</location>
    </subcellularLocation>
</comment>
<comment type="domain">
    <text evidence="1">The C-terminal domain binds 2 Fe-S clusters but is otherwise mostly in an intrinsically disordered conformation.</text>
</comment>
<comment type="domain">
    <text evidence="1">The N-terminal domain has structural similarity with S-adenosyl-L-methionine-dependent methyltransferases, but does not bind S-adenosyl-L-methionine. It is required for correct assembly of the 2 Fe-S clusters.</text>
</comment>
<comment type="domain">
    <text evidence="1">The twin Cx2C motifs are involved in the recognition by the mitochondrial MIA40-ERV1 disulfide relay system. The formation of 2 disulfide bonds in the Cx2C motifs through dithiol/disulfide exchange reactions effectively traps the protein in the mitochondrial intermembrane space.</text>
</comment>
<comment type="similarity">
    <text evidence="1">Belongs to the anamorsin family.</text>
</comment>
<reference key="1">
    <citation type="journal article" date="2007" name="Nature">
        <title>Evolution of genes and genomes on the Drosophila phylogeny.</title>
        <authorList>
            <consortium name="Drosophila 12 genomes consortium"/>
        </authorList>
    </citation>
    <scope>NUCLEOTIDE SEQUENCE [LARGE SCALE GENOMIC DNA]</scope>
    <source>
        <strain>Rob3c / Tucson 14021-0248.25</strain>
    </source>
</reference>
<evidence type="ECO:0000255" key="1">
    <source>
        <dbReference type="HAMAP-Rule" id="MF_03115"/>
    </source>
</evidence>
<proteinExistence type="inferred from homology"/>
<gene>
    <name evidence="1" type="primary">CIAPIN1</name>
    <name evidence="1" type="synonym">l(2)35Bg</name>
    <name type="ORF">GM14566</name>
</gene>
<dbReference type="EMBL" id="CH480818">
    <property type="protein sequence ID" value="EDW51797.1"/>
    <property type="molecule type" value="Genomic_DNA"/>
</dbReference>
<dbReference type="STRING" id="7238.B4HXL7"/>
<dbReference type="EnsemblMetazoa" id="FBtr0197551">
    <property type="protein sequence ID" value="FBpp0196043"/>
    <property type="gene ID" value="FBgn0169487"/>
</dbReference>
<dbReference type="EnsemblMetazoa" id="XM_002035838.2">
    <property type="protein sequence ID" value="XP_002035874.1"/>
    <property type="gene ID" value="LOC6611327"/>
</dbReference>
<dbReference type="GeneID" id="6611327"/>
<dbReference type="KEGG" id="dse:6611327"/>
<dbReference type="CTD" id="57019"/>
<dbReference type="HOGENOM" id="CLU_064393_1_0_1"/>
<dbReference type="OMA" id="GFINCRE"/>
<dbReference type="OrthoDB" id="25724at7215"/>
<dbReference type="PhylomeDB" id="B4HXL7"/>
<dbReference type="Proteomes" id="UP000001292">
    <property type="component" value="Unassembled WGS sequence"/>
</dbReference>
<dbReference type="GO" id="GO:0005758">
    <property type="term" value="C:mitochondrial intermembrane space"/>
    <property type="evidence" value="ECO:0007669"/>
    <property type="project" value="UniProtKB-SubCell"/>
</dbReference>
<dbReference type="GO" id="GO:0051537">
    <property type="term" value="F:2 iron, 2 sulfur cluster binding"/>
    <property type="evidence" value="ECO:0007669"/>
    <property type="project" value="UniProtKB-UniRule"/>
</dbReference>
<dbReference type="GO" id="GO:0051539">
    <property type="term" value="F:4 iron, 4 sulfur cluster binding"/>
    <property type="evidence" value="ECO:0007669"/>
    <property type="project" value="UniProtKB-KW"/>
</dbReference>
<dbReference type="GO" id="GO:0009055">
    <property type="term" value="F:electron transfer activity"/>
    <property type="evidence" value="ECO:0007669"/>
    <property type="project" value="UniProtKB-UniRule"/>
</dbReference>
<dbReference type="GO" id="GO:0046872">
    <property type="term" value="F:metal ion binding"/>
    <property type="evidence" value="ECO:0007669"/>
    <property type="project" value="UniProtKB-KW"/>
</dbReference>
<dbReference type="GO" id="GO:0016226">
    <property type="term" value="P:iron-sulfur cluster assembly"/>
    <property type="evidence" value="ECO:0007669"/>
    <property type="project" value="UniProtKB-UniRule"/>
</dbReference>
<dbReference type="FunFam" id="3.40.50.150:FF:000545">
    <property type="entry name" value="Anamorsin homolog"/>
    <property type="match status" value="1"/>
</dbReference>
<dbReference type="Gene3D" id="3.40.50.150">
    <property type="entry name" value="Vaccinia Virus protein VP39"/>
    <property type="match status" value="1"/>
</dbReference>
<dbReference type="HAMAP" id="MF_03115">
    <property type="entry name" value="Anamorsin"/>
    <property type="match status" value="1"/>
</dbReference>
<dbReference type="InterPro" id="IPR007785">
    <property type="entry name" value="Anamorsin"/>
</dbReference>
<dbReference type="InterPro" id="IPR049011">
    <property type="entry name" value="Anamorsin_N_metazoan"/>
</dbReference>
<dbReference type="InterPro" id="IPR046408">
    <property type="entry name" value="CIAPIN1"/>
</dbReference>
<dbReference type="InterPro" id="IPR029063">
    <property type="entry name" value="SAM-dependent_MTases_sf"/>
</dbReference>
<dbReference type="PANTHER" id="PTHR13273">
    <property type="entry name" value="ANAMORSIN"/>
    <property type="match status" value="1"/>
</dbReference>
<dbReference type="PANTHER" id="PTHR13273:SF14">
    <property type="entry name" value="ANAMORSIN"/>
    <property type="match status" value="1"/>
</dbReference>
<dbReference type="Pfam" id="PF20922">
    <property type="entry name" value="Anamorsin_N"/>
    <property type="match status" value="1"/>
</dbReference>
<dbReference type="Pfam" id="PF05093">
    <property type="entry name" value="CIAPIN1"/>
    <property type="match status" value="2"/>
</dbReference>
<organism>
    <name type="scientific">Drosophila sechellia</name>
    <name type="common">Fruit fly</name>
    <dbReference type="NCBI Taxonomy" id="7238"/>
    <lineage>
        <taxon>Eukaryota</taxon>
        <taxon>Metazoa</taxon>
        <taxon>Ecdysozoa</taxon>
        <taxon>Arthropoda</taxon>
        <taxon>Hexapoda</taxon>
        <taxon>Insecta</taxon>
        <taxon>Pterygota</taxon>
        <taxon>Neoptera</taxon>
        <taxon>Endopterygota</taxon>
        <taxon>Diptera</taxon>
        <taxon>Brachycera</taxon>
        <taxon>Muscomorpha</taxon>
        <taxon>Ephydroidea</taxon>
        <taxon>Drosophilidae</taxon>
        <taxon>Drosophila</taxon>
        <taxon>Sophophora</taxon>
    </lineage>
</organism>
<accession>B4HXL7</accession>
<name>DRE2_DROSE</name>
<sequence>MENFKGLQKSLYIWTDSADLDKRVEQLKAATGGDVALENVHRLSFSSYANSSFDLIVIECAQLTDSYVKLLHMLKPSGKLHLVSFIGPAASLLQEIKLSGFINCREDSPDALSAEKPGYETGSSARLSFAKKNANAANVWKISGDDEELIDEEELLDEEDKQKPDPAGLRVCSTTGKRKACKNCSCGLAEELETEKQSQKATENAKSSCGNCYLGDAFRCSTCPYLGMPAFKPGEKVQLADNLLKSDI</sequence>
<keyword id="KW-0001">2Fe-2S</keyword>
<keyword id="KW-0004">4Fe-4S</keyword>
<keyword id="KW-0963">Cytoplasm</keyword>
<keyword id="KW-0408">Iron</keyword>
<keyword id="KW-0411">Iron-sulfur</keyword>
<keyword id="KW-0479">Metal-binding</keyword>
<keyword id="KW-0496">Mitochondrion</keyword>
<keyword id="KW-1185">Reference proteome</keyword>
<protein>
    <recommendedName>
        <fullName evidence="1">Anamorsin homolog</fullName>
    </recommendedName>
    <alternativeName>
        <fullName evidence="1">Fe-S cluster assembly protein DRE2 homolog</fullName>
    </alternativeName>
</protein>
<feature type="chain" id="PRO_0000392321" description="Anamorsin homolog">
    <location>
        <begin position="1"/>
        <end position="248"/>
    </location>
</feature>
<feature type="region of interest" description="N-terminal SAM-like domain" evidence="1">
    <location>
        <begin position="4"/>
        <end position="129"/>
    </location>
</feature>
<feature type="region of interest" description="Linker" evidence="1">
    <location>
        <begin position="130"/>
        <end position="161"/>
    </location>
</feature>
<feature type="region of interest" description="Fe-S binding site A" evidence="1">
    <location>
        <begin position="172"/>
        <end position="186"/>
    </location>
</feature>
<feature type="region of interest" description="Fe-S binding site B" evidence="1">
    <location>
        <begin position="209"/>
        <end position="223"/>
    </location>
</feature>
<feature type="short sequence motif" description="Cx2C motif 1" evidence="1">
    <location>
        <begin position="209"/>
        <end position="212"/>
    </location>
</feature>
<feature type="short sequence motif" description="Cx2C motif 2" evidence="1">
    <location>
        <begin position="220"/>
        <end position="223"/>
    </location>
</feature>
<feature type="binding site" evidence="1">
    <location>
        <position position="172"/>
    </location>
    <ligand>
        <name>[2Fe-2S] cluster</name>
        <dbReference type="ChEBI" id="CHEBI:190135"/>
    </ligand>
</feature>
<feature type="binding site" evidence="1">
    <location>
        <position position="181"/>
    </location>
    <ligand>
        <name>[2Fe-2S] cluster</name>
        <dbReference type="ChEBI" id="CHEBI:190135"/>
    </ligand>
</feature>
<feature type="binding site" evidence="1">
    <location>
        <position position="184"/>
    </location>
    <ligand>
        <name>[2Fe-2S] cluster</name>
        <dbReference type="ChEBI" id="CHEBI:190135"/>
    </ligand>
</feature>
<feature type="binding site" evidence="1">
    <location>
        <position position="186"/>
    </location>
    <ligand>
        <name>[2Fe-2S] cluster</name>
        <dbReference type="ChEBI" id="CHEBI:190135"/>
    </ligand>
</feature>
<feature type="binding site" evidence="1">
    <location>
        <position position="209"/>
    </location>
    <ligand>
        <name>[4Fe-4S] cluster</name>
        <dbReference type="ChEBI" id="CHEBI:49883"/>
    </ligand>
</feature>
<feature type="binding site" evidence="1">
    <location>
        <position position="212"/>
    </location>
    <ligand>
        <name>[4Fe-4S] cluster</name>
        <dbReference type="ChEBI" id="CHEBI:49883"/>
    </ligand>
</feature>
<feature type="binding site" evidence="1">
    <location>
        <position position="220"/>
    </location>
    <ligand>
        <name>[4Fe-4S] cluster</name>
        <dbReference type="ChEBI" id="CHEBI:49883"/>
    </ligand>
</feature>
<feature type="binding site" evidence="1">
    <location>
        <position position="223"/>
    </location>
    <ligand>
        <name>[4Fe-4S] cluster</name>
        <dbReference type="ChEBI" id="CHEBI:49883"/>
    </ligand>
</feature>